<comment type="function">
    <text evidence="1">One of the primary rRNA binding proteins, it binds directly near the 3'-end of the 23S rRNA, where it nucleates assembly of the 50S subunit.</text>
</comment>
<comment type="subunit">
    <text evidence="1">Part of the 50S ribosomal subunit. Forms a cluster with proteins L14 and L19.</text>
</comment>
<comment type="PTM">
    <text evidence="1">Methylated by PrmB.</text>
</comment>
<comment type="similarity">
    <text evidence="1">Belongs to the universal ribosomal protein uL3 family.</text>
</comment>
<evidence type="ECO:0000255" key="1">
    <source>
        <dbReference type="HAMAP-Rule" id="MF_01325"/>
    </source>
</evidence>
<evidence type="ECO:0000256" key="2">
    <source>
        <dbReference type="SAM" id="MobiDB-lite"/>
    </source>
</evidence>
<evidence type="ECO:0000305" key="3"/>
<reference key="1">
    <citation type="journal article" date="2002" name="Nat. Biotechnol.">
        <title>Genome sequence of the dissimilatory metal ion-reducing bacterium Shewanella oneidensis.</title>
        <authorList>
            <person name="Heidelberg J.F."/>
            <person name="Paulsen I.T."/>
            <person name="Nelson K.E."/>
            <person name="Gaidos E.J."/>
            <person name="Nelson W.C."/>
            <person name="Read T.D."/>
            <person name="Eisen J.A."/>
            <person name="Seshadri R."/>
            <person name="Ward N.L."/>
            <person name="Methe B.A."/>
            <person name="Clayton R.A."/>
            <person name="Meyer T."/>
            <person name="Tsapin A."/>
            <person name="Scott J."/>
            <person name="Beanan M.J."/>
            <person name="Brinkac L.M."/>
            <person name="Daugherty S.C."/>
            <person name="DeBoy R.T."/>
            <person name="Dodson R.J."/>
            <person name="Durkin A.S."/>
            <person name="Haft D.H."/>
            <person name="Kolonay J.F."/>
            <person name="Madupu R."/>
            <person name="Peterson J.D."/>
            <person name="Umayam L.A."/>
            <person name="White O."/>
            <person name="Wolf A.M."/>
            <person name="Vamathevan J.J."/>
            <person name="Weidman J.F."/>
            <person name="Impraim M."/>
            <person name="Lee K."/>
            <person name="Berry K.J."/>
            <person name="Lee C."/>
            <person name="Mueller J."/>
            <person name="Khouri H.M."/>
            <person name="Gill J."/>
            <person name="Utterback T.R."/>
            <person name="McDonald L.A."/>
            <person name="Feldblyum T.V."/>
            <person name="Smith H.O."/>
            <person name="Venter J.C."/>
            <person name="Nealson K.H."/>
            <person name="Fraser C.M."/>
        </authorList>
    </citation>
    <scope>NUCLEOTIDE SEQUENCE [LARGE SCALE GENOMIC DNA]</scope>
    <source>
        <strain>ATCC 700550 / JCM 31522 / CIP 106686 / LMG 19005 / NCIMB 14063 / MR-1</strain>
    </source>
</reference>
<gene>
    <name evidence="1" type="primary">rplC</name>
    <name type="ordered locus">SO_0231</name>
</gene>
<protein>
    <recommendedName>
        <fullName evidence="1">Large ribosomal subunit protein uL3</fullName>
    </recommendedName>
    <alternativeName>
        <fullName evidence="3">50S ribosomal protein L3</fullName>
    </alternativeName>
</protein>
<accession>Q8EK68</accession>
<name>RL3_SHEON</name>
<dbReference type="EMBL" id="AE014299">
    <property type="protein sequence ID" value="AAN53316.1"/>
    <property type="molecule type" value="Genomic_DNA"/>
</dbReference>
<dbReference type="RefSeq" id="NP_715871.1">
    <property type="nucleotide sequence ID" value="NC_004347.2"/>
</dbReference>
<dbReference type="RefSeq" id="WP_011070617.1">
    <property type="nucleotide sequence ID" value="NZ_CP053946.1"/>
</dbReference>
<dbReference type="SMR" id="Q8EK68"/>
<dbReference type="STRING" id="211586.SO_0231"/>
<dbReference type="PaxDb" id="211586-SO_0231"/>
<dbReference type="GeneID" id="94726186"/>
<dbReference type="KEGG" id="son:SO_0231"/>
<dbReference type="PATRIC" id="fig|211586.12.peg.219"/>
<dbReference type="eggNOG" id="COG0087">
    <property type="taxonomic scope" value="Bacteria"/>
</dbReference>
<dbReference type="HOGENOM" id="CLU_044142_4_1_6"/>
<dbReference type="OrthoDB" id="9806135at2"/>
<dbReference type="PhylomeDB" id="Q8EK68"/>
<dbReference type="BioCyc" id="SONE211586:G1GMP-220-MONOMER"/>
<dbReference type="Proteomes" id="UP000008186">
    <property type="component" value="Chromosome"/>
</dbReference>
<dbReference type="GO" id="GO:0022625">
    <property type="term" value="C:cytosolic large ribosomal subunit"/>
    <property type="evidence" value="ECO:0000318"/>
    <property type="project" value="GO_Central"/>
</dbReference>
<dbReference type="GO" id="GO:0019843">
    <property type="term" value="F:rRNA binding"/>
    <property type="evidence" value="ECO:0007669"/>
    <property type="project" value="UniProtKB-UniRule"/>
</dbReference>
<dbReference type="GO" id="GO:0003735">
    <property type="term" value="F:structural constituent of ribosome"/>
    <property type="evidence" value="ECO:0000318"/>
    <property type="project" value="GO_Central"/>
</dbReference>
<dbReference type="GO" id="GO:0006412">
    <property type="term" value="P:translation"/>
    <property type="evidence" value="ECO:0007669"/>
    <property type="project" value="UniProtKB-UniRule"/>
</dbReference>
<dbReference type="FunFam" id="2.40.30.10:FF:000004">
    <property type="entry name" value="50S ribosomal protein L3"/>
    <property type="match status" value="1"/>
</dbReference>
<dbReference type="FunFam" id="3.30.160.810:FF:000001">
    <property type="entry name" value="50S ribosomal protein L3"/>
    <property type="match status" value="1"/>
</dbReference>
<dbReference type="Gene3D" id="3.30.160.810">
    <property type="match status" value="1"/>
</dbReference>
<dbReference type="Gene3D" id="2.40.30.10">
    <property type="entry name" value="Translation factors"/>
    <property type="match status" value="1"/>
</dbReference>
<dbReference type="HAMAP" id="MF_01325_B">
    <property type="entry name" value="Ribosomal_uL3_B"/>
    <property type="match status" value="1"/>
</dbReference>
<dbReference type="InterPro" id="IPR000597">
    <property type="entry name" value="Ribosomal_uL3"/>
</dbReference>
<dbReference type="InterPro" id="IPR019927">
    <property type="entry name" value="Ribosomal_uL3_bac/org-type"/>
</dbReference>
<dbReference type="InterPro" id="IPR019926">
    <property type="entry name" value="Ribosomal_uL3_CS"/>
</dbReference>
<dbReference type="InterPro" id="IPR009000">
    <property type="entry name" value="Transl_B-barrel_sf"/>
</dbReference>
<dbReference type="NCBIfam" id="TIGR03625">
    <property type="entry name" value="L3_bact"/>
    <property type="match status" value="1"/>
</dbReference>
<dbReference type="PANTHER" id="PTHR11229">
    <property type="entry name" value="50S RIBOSOMAL PROTEIN L3"/>
    <property type="match status" value="1"/>
</dbReference>
<dbReference type="PANTHER" id="PTHR11229:SF16">
    <property type="entry name" value="LARGE RIBOSOMAL SUBUNIT PROTEIN UL3C"/>
    <property type="match status" value="1"/>
</dbReference>
<dbReference type="Pfam" id="PF00297">
    <property type="entry name" value="Ribosomal_L3"/>
    <property type="match status" value="1"/>
</dbReference>
<dbReference type="SUPFAM" id="SSF50447">
    <property type="entry name" value="Translation proteins"/>
    <property type="match status" value="1"/>
</dbReference>
<dbReference type="PROSITE" id="PS00474">
    <property type="entry name" value="RIBOSOMAL_L3"/>
    <property type="match status" value="1"/>
</dbReference>
<keyword id="KW-0488">Methylation</keyword>
<keyword id="KW-1185">Reference proteome</keyword>
<keyword id="KW-0687">Ribonucleoprotein</keyword>
<keyword id="KW-0689">Ribosomal protein</keyword>
<keyword id="KW-0694">RNA-binding</keyword>
<keyword id="KW-0699">rRNA-binding</keyword>
<organism>
    <name type="scientific">Shewanella oneidensis (strain ATCC 700550 / JCM 31522 / CIP 106686 / LMG 19005 / NCIMB 14063 / MR-1)</name>
    <dbReference type="NCBI Taxonomy" id="211586"/>
    <lineage>
        <taxon>Bacteria</taxon>
        <taxon>Pseudomonadati</taxon>
        <taxon>Pseudomonadota</taxon>
        <taxon>Gammaproteobacteria</taxon>
        <taxon>Alteromonadales</taxon>
        <taxon>Shewanellaceae</taxon>
        <taxon>Shewanella</taxon>
    </lineage>
</organism>
<sequence length="212" mass="22532">MAIGLIGRKVGMTRIFTEDGVSIPVTVIEVAGNRVTQVKTLETDGYRALQVTTGTKKANRITKPEAGHFAKSGVEAGRGLWELRLADGEGEGIEVGAELNVGIFADVAKVDVTGQSKGKGFQGGVKRWNFRTQDMTHGNSLSHRSNGSIGQNQTPGRVFKGKKMSGHMGAERVTTQNLDVVRVDVERNLLLVKGAVPGATNGDLIIKPAVKA</sequence>
<feature type="chain" id="PRO_0000077150" description="Large ribosomal subunit protein uL3">
    <location>
        <begin position="1"/>
        <end position="212"/>
    </location>
</feature>
<feature type="region of interest" description="Disordered" evidence="2">
    <location>
        <begin position="136"/>
        <end position="155"/>
    </location>
</feature>
<feature type="modified residue" description="N5-methylglutamine" evidence="1">
    <location>
        <position position="153"/>
    </location>
</feature>
<proteinExistence type="inferred from homology"/>